<proteinExistence type="inferred from homology"/>
<sequence length="359" mass="38993">MSSQLIPATRRVLNNAPLLDAAHGKTPTRTPVWFMRQAGRSLPEYLKVREGISMLDSCFMPELLAEITMQPVRRHDVDAAILFSDIVVPLRAAGVGVEIVPGRGPVMDQPVRTRADIDNLPILDHEVTEVSKGISIILDELTDTQALIGFAGAPFTLASYLVEGGPSKNHERTKAMIHAEPETWHALMERLVPTVVNFLKTQIDAGIDAMQLFDSWAGFLTERDYTEHVLPYSTRILQEVEQYQLPRIHFGVGTGELLGAMSRAGSEVMGVDWRVPLDKAAERIAAVSGPKVLQGNLDPALLFAGTEPLTREINRIKGEAAAAIAAGNATGHIFNLGHGVLPNTVAENITEAVSIIHAS</sequence>
<keyword id="KW-0963">Cytoplasm</keyword>
<keyword id="KW-0210">Decarboxylase</keyword>
<keyword id="KW-0456">Lyase</keyword>
<keyword id="KW-0627">Porphyrin biosynthesis</keyword>
<keyword id="KW-1185">Reference proteome</keyword>
<comment type="function">
    <text evidence="1">Catalyzes the decarboxylation of four acetate groups of uroporphyrinogen-III to yield coproporphyrinogen-III.</text>
</comment>
<comment type="catalytic activity">
    <reaction evidence="1">
        <text>uroporphyrinogen III + 4 H(+) = coproporphyrinogen III + 4 CO2</text>
        <dbReference type="Rhea" id="RHEA:19865"/>
        <dbReference type="ChEBI" id="CHEBI:15378"/>
        <dbReference type="ChEBI" id="CHEBI:16526"/>
        <dbReference type="ChEBI" id="CHEBI:57308"/>
        <dbReference type="ChEBI" id="CHEBI:57309"/>
        <dbReference type="EC" id="4.1.1.37"/>
    </reaction>
</comment>
<comment type="pathway">
    <text evidence="1">Porphyrin-containing compound metabolism; protoporphyrin-IX biosynthesis; coproporphyrinogen-III from 5-aminolevulinate: step 4/4.</text>
</comment>
<comment type="subunit">
    <text evidence="1">Homodimer.</text>
</comment>
<comment type="subcellular location">
    <subcellularLocation>
        <location evidence="1">Cytoplasm</location>
    </subcellularLocation>
</comment>
<comment type="similarity">
    <text evidence="1">Belongs to the uroporphyrinogen decarboxylase family.</text>
</comment>
<comment type="sequence caution" evidence="2">
    <conflict type="erroneous initiation">
        <sequence resource="EMBL-CDS" id="BAC17268"/>
    </conflict>
</comment>
<organism>
    <name type="scientific">Corynebacterium efficiens (strain DSM 44549 / YS-314 / AJ 12310 / JCM 11189 / NBRC 100395)</name>
    <dbReference type="NCBI Taxonomy" id="196164"/>
    <lineage>
        <taxon>Bacteria</taxon>
        <taxon>Bacillati</taxon>
        <taxon>Actinomycetota</taxon>
        <taxon>Actinomycetes</taxon>
        <taxon>Mycobacteriales</taxon>
        <taxon>Corynebacteriaceae</taxon>
        <taxon>Corynebacterium</taxon>
    </lineage>
</organism>
<gene>
    <name evidence="1" type="primary">hemE</name>
    <name type="ordered locus">CE0458</name>
</gene>
<evidence type="ECO:0000255" key="1">
    <source>
        <dbReference type="HAMAP-Rule" id="MF_00218"/>
    </source>
</evidence>
<evidence type="ECO:0000305" key="2"/>
<accession>Q8FSD6</accession>
<protein>
    <recommendedName>
        <fullName evidence="1">Uroporphyrinogen decarboxylase</fullName>
        <shortName evidence="1">UPD</shortName>
        <shortName evidence="1">URO-D</shortName>
        <ecNumber evidence="1">4.1.1.37</ecNumber>
    </recommendedName>
</protein>
<dbReference type="EC" id="4.1.1.37" evidence="1"/>
<dbReference type="EMBL" id="BA000035">
    <property type="protein sequence ID" value="BAC17268.1"/>
    <property type="status" value="ALT_INIT"/>
    <property type="molecule type" value="Genomic_DNA"/>
</dbReference>
<dbReference type="RefSeq" id="WP_006770306.1">
    <property type="nucleotide sequence ID" value="NC_004369.1"/>
</dbReference>
<dbReference type="SMR" id="Q8FSD6"/>
<dbReference type="STRING" id="196164.gene:10740856"/>
<dbReference type="KEGG" id="cef:CE0458"/>
<dbReference type="eggNOG" id="COG0407">
    <property type="taxonomic scope" value="Bacteria"/>
</dbReference>
<dbReference type="HOGENOM" id="CLU_040933_0_1_11"/>
<dbReference type="UniPathway" id="UPA00251">
    <property type="reaction ID" value="UER00321"/>
</dbReference>
<dbReference type="Proteomes" id="UP000001409">
    <property type="component" value="Chromosome"/>
</dbReference>
<dbReference type="GO" id="GO:0005829">
    <property type="term" value="C:cytosol"/>
    <property type="evidence" value="ECO:0007669"/>
    <property type="project" value="TreeGrafter"/>
</dbReference>
<dbReference type="GO" id="GO:0004853">
    <property type="term" value="F:uroporphyrinogen decarboxylase activity"/>
    <property type="evidence" value="ECO:0007669"/>
    <property type="project" value="UniProtKB-UniRule"/>
</dbReference>
<dbReference type="GO" id="GO:0006782">
    <property type="term" value="P:protoporphyrinogen IX biosynthetic process"/>
    <property type="evidence" value="ECO:0007669"/>
    <property type="project" value="UniProtKB-UniRule"/>
</dbReference>
<dbReference type="CDD" id="cd00717">
    <property type="entry name" value="URO-D"/>
    <property type="match status" value="1"/>
</dbReference>
<dbReference type="Gene3D" id="3.20.20.210">
    <property type="match status" value="1"/>
</dbReference>
<dbReference type="HAMAP" id="MF_00218">
    <property type="entry name" value="URO_D"/>
    <property type="match status" value="1"/>
</dbReference>
<dbReference type="InterPro" id="IPR038071">
    <property type="entry name" value="UROD/MetE-like_sf"/>
</dbReference>
<dbReference type="InterPro" id="IPR006361">
    <property type="entry name" value="Uroporphyrinogen_deCO2ase_HemE"/>
</dbReference>
<dbReference type="InterPro" id="IPR000257">
    <property type="entry name" value="Uroporphyrinogen_deCOase"/>
</dbReference>
<dbReference type="NCBIfam" id="TIGR01464">
    <property type="entry name" value="hemE"/>
    <property type="match status" value="1"/>
</dbReference>
<dbReference type="PANTHER" id="PTHR21091">
    <property type="entry name" value="METHYLTETRAHYDROFOLATE:HOMOCYSTEINE METHYLTRANSFERASE RELATED"/>
    <property type="match status" value="1"/>
</dbReference>
<dbReference type="PANTHER" id="PTHR21091:SF169">
    <property type="entry name" value="UROPORPHYRINOGEN DECARBOXYLASE"/>
    <property type="match status" value="1"/>
</dbReference>
<dbReference type="Pfam" id="PF01208">
    <property type="entry name" value="URO-D"/>
    <property type="match status" value="1"/>
</dbReference>
<dbReference type="SUPFAM" id="SSF51726">
    <property type="entry name" value="UROD/MetE-like"/>
    <property type="match status" value="1"/>
</dbReference>
<dbReference type="PROSITE" id="PS00906">
    <property type="entry name" value="UROD_1"/>
    <property type="match status" value="1"/>
</dbReference>
<dbReference type="PROSITE" id="PS00907">
    <property type="entry name" value="UROD_2"/>
    <property type="match status" value="1"/>
</dbReference>
<name>DCUP_COREF</name>
<reference key="1">
    <citation type="journal article" date="2003" name="Genome Res.">
        <title>Comparative complete genome sequence analysis of the amino acid replacements responsible for the thermostability of Corynebacterium efficiens.</title>
        <authorList>
            <person name="Nishio Y."/>
            <person name="Nakamura Y."/>
            <person name="Kawarabayasi Y."/>
            <person name="Usuda Y."/>
            <person name="Kimura E."/>
            <person name="Sugimoto S."/>
            <person name="Matsui K."/>
            <person name="Yamagishi A."/>
            <person name="Kikuchi H."/>
            <person name="Ikeo K."/>
            <person name="Gojobori T."/>
        </authorList>
    </citation>
    <scope>NUCLEOTIDE SEQUENCE [LARGE SCALE GENOMIC DNA]</scope>
    <source>
        <strain>DSM 44549 / YS-314 / AJ 12310 / JCM 11189 / NBRC 100395</strain>
    </source>
</reference>
<feature type="chain" id="PRO_0000187599" description="Uroporphyrinogen decarboxylase">
    <location>
        <begin position="1"/>
        <end position="359"/>
    </location>
</feature>
<feature type="binding site" evidence="1">
    <location>
        <begin position="36"/>
        <end position="40"/>
    </location>
    <ligand>
        <name>substrate</name>
    </ligand>
</feature>
<feature type="binding site" evidence="1">
    <location>
        <position position="85"/>
    </location>
    <ligand>
        <name>substrate</name>
    </ligand>
</feature>
<feature type="binding site" evidence="1">
    <location>
        <position position="160"/>
    </location>
    <ligand>
        <name>substrate</name>
    </ligand>
</feature>
<feature type="binding site" evidence="1">
    <location>
        <position position="215"/>
    </location>
    <ligand>
        <name>substrate</name>
    </ligand>
</feature>
<feature type="binding site" evidence="1">
    <location>
        <position position="338"/>
    </location>
    <ligand>
        <name>substrate</name>
    </ligand>
</feature>
<feature type="site" description="Transition state stabilizer" evidence="1">
    <location>
        <position position="85"/>
    </location>
</feature>